<dbReference type="EMBL" id="AK292169">
    <property type="protein sequence ID" value="BAF84858.1"/>
    <property type="molecule type" value="mRNA"/>
</dbReference>
<dbReference type="EMBL" id="AL354723">
    <property type="status" value="NOT_ANNOTATED_CDS"/>
    <property type="molecule type" value="Genomic_DNA"/>
</dbReference>
<dbReference type="EMBL" id="AL589675">
    <property type="status" value="NOT_ANNOTATED_CDS"/>
    <property type="molecule type" value="Genomic_DNA"/>
</dbReference>
<dbReference type="EMBL" id="CH471071">
    <property type="protein sequence ID" value="EAW58802.1"/>
    <property type="molecule type" value="Genomic_DNA"/>
</dbReference>
<dbReference type="EMBL" id="BC016137">
    <property type="protein sequence ID" value="AAH16137.2"/>
    <property type="molecule type" value="mRNA"/>
</dbReference>
<dbReference type="EMBL" id="D13645">
    <property type="protein sequence ID" value="BAA02808.1"/>
    <property type="status" value="ALT_INIT"/>
    <property type="molecule type" value="mRNA"/>
</dbReference>
<dbReference type="EMBL" id="AF490254">
    <property type="protein sequence ID" value="AAO85462.1"/>
    <property type="molecule type" value="mRNA"/>
</dbReference>
<dbReference type="EMBL" id="CR456957">
    <property type="protein sequence ID" value="CAG33238.1"/>
    <property type="molecule type" value="mRNA"/>
</dbReference>
<dbReference type="EMBL" id="AY047588">
    <property type="protein sequence ID" value="AAL06072.1"/>
    <property type="molecule type" value="mRNA"/>
</dbReference>
<dbReference type="EMBL" id="AY047589">
    <property type="protein sequence ID" value="AAL06073.1"/>
    <property type="molecule type" value="mRNA"/>
</dbReference>
<dbReference type="EMBL" id="AY047590">
    <property type="protein sequence ID" value="AAL06074.1"/>
    <property type="molecule type" value="mRNA"/>
</dbReference>
<dbReference type="CCDS" id="CCDS6448.2"/>
<dbReference type="RefSeq" id="NP_055693.4">
    <property type="nucleotide sequence ID" value="NM_014878.4"/>
</dbReference>
<dbReference type="PDB" id="4WZR">
    <property type="method" value="X-ray"/>
    <property type="resolution" value="2.15 A"/>
    <property type="chains" value="A/B=123-648"/>
</dbReference>
<dbReference type="PDB" id="4WZW">
    <property type="method" value="X-ray"/>
    <property type="resolution" value="2.95 A"/>
    <property type="chains" value="A=129-648"/>
</dbReference>
<dbReference type="PDBsum" id="4WZR"/>
<dbReference type="PDBsum" id="4WZW"/>
<dbReference type="SMR" id="Q15397"/>
<dbReference type="BioGRID" id="115259">
    <property type="interactions" value="282"/>
</dbReference>
<dbReference type="FunCoup" id="Q15397">
    <property type="interactions" value="2942"/>
</dbReference>
<dbReference type="IntAct" id="Q15397">
    <property type="interactions" value="179"/>
</dbReference>
<dbReference type="MINT" id="Q15397"/>
<dbReference type="STRING" id="9606.ENSP00000380982"/>
<dbReference type="GlyGen" id="Q15397">
    <property type="glycosylation" value="2 sites, 1 O-linked glycan (2 sites)"/>
</dbReference>
<dbReference type="iPTMnet" id="Q15397"/>
<dbReference type="PhosphoSitePlus" id="Q15397"/>
<dbReference type="SwissPalm" id="Q15397"/>
<dbReference type="BioMuta" id="PUM3"/>
<dbReference type="DMDM" id="81175177"/>
<dbReference type="jPOST" id="Q15397"/>
<dbReference type="MassIVE" id="Q15397"/>
<dbReference type="PaxDb" id="9606-ENSP00000380982"/>
<dbReference type="PeptideAtlas" id="Q15397"/>
<dbReference type="ProteomicsDB" id="60566"/>
<dbReference type="Pumba" id="Q15397"/>
<dbReference type="Antibodypedia" id="1036">
    <property type="antibodies" value="112 antibodies from 20 providers"/>
</dbReference>
<dbReference type="DNASU" id="9933"/>
<dbReference type="Ensembl" id="ENST00000397885.3">
    <property type="protein sequence ID" value="ENSP00000380982.2"/>
    <property type="gene ID" value="ENSG00000080608.10"/>
</dbReference>
<dbReference type="GeneID" id="9933"/>
<dbReference type="KEGG" id="hsa:9933"/>
<dbReference type="MANE-Select" id="ENST00000397885.3">
    <property type="protein sequence ID" value="ENSP00000380982.2"/>
    <property type="RefSeq nucleotide sequence ID" value="NM_014878.5"/>
    <property type="RefSeq protein sequence ID" value="NP_055693.4"/>
</dbReference>
<dbReference type="UCSC" id="uc003zhp.2">
    <property type="organism name" value="human"/>
</dbReference>
<dbReference type="AGR" id="HGNC:29676"/>
<dbReference type="CTD" id="9933"/>
<dbReference type="DisGeNET" id="9933"/>
<dbReference type="GeneCards" id="PUM3"/>
<dbReference type="HGNC" id="HGNC:29676">
    <property type="gene designation" value="PUM3"/>
</dbReference>
<dbReference type="HPA" id="ENSG00000080608">
    <property type="expression patterns" value="Low tissue specificity"/>
</dbReference>
<dbReference type="MIM" id="609960">
    <property type="type" value="gene"/>
</dbReference>
<dbReference type="neXtProt" id="NX_Q15397"/>
<dbReference type="OpenTargets" id="ENSG00000080608"/>
<dbReference type="PharmGKB" id="PA134895115"/>
<dbReference type="VEuPathDB" id="HostDB:ENSG00000080608"/>
<dbReference type="eggNOG" id="KOG2050">
    <property type="taxonomic scope" value="Eukaryota"/>
</dbReference>
<dbReference type="GeneTree" id="ENSGT00390000015757"/>
<dbReference type="HOGENOM" id="CLU_013994_0_1_1"/>
<dbReference type="InParanoid" id="Q15397"/>
<dbReference type="OMA" id="YGPEFSI"/>
<dbReference type="OrthoDB" id="497380at2759"/>
<dbReference type="PAN-GO" id="Q15397">
    <property type="GO annotations" value="3 GO annotations based on evolutionary models"/>
</dbReference>
<dbReference type="PhylomeDB" id="Q15397"/>
<dbReference type="TreeFam" id="TF312954"/>
<dbReference type="PathwayCommons" id="Q15397"/>
<dbReference type="SignaLink" id="Q15397"/>
<dbReference type="SIGNOR" id="Q15397"/>
<dbReference type="BioGRID-ORCS" id="9933">
    <property type="hits" value="66 hits in 1146 CRISPR screens"/>
</dbReference>
<dbReference type="CD-CODE" id="91857CE7">
    <property type="entry name" value="Nucleolus"/>
</dbReference>
<dbReference type="ChiTaRS" id="PUM3">
    <property type="organism name" value="human"/>
</dbReference>
<dbReference type="EvolutionaryTrace" id="Q15397"/>
<dbReference type="GeneWiki" id="KIAA0020"/>
<dbReference type="GenomeRNAi" id="9933"/>
<dbReference type="Pharos" id="Q15397">
    <property type="development level" value="Tbio"/>
</dbReference>
<dbReference type="PRO" id="PR:Q15397"/>
<dbReference type="Proteomes" id="UP000005640">
    <property type="component" value="Chromosome 9"/>
</dbReference>
<dbReference type="RNAct" id="Q15397">
    <property type="molecule type" value="protein"/>
</dbReference>
<dbReference type="Bgee" id="ENSG00000080608">
    <property type="expression patterns" value="Expressed in adrenal tissue and 182 other cell types or tissues"/>
</dbReference>
<dbReference type="ExpressionAtlas" id="Q15397">
    <property type="expression patterns" value="baseline and differential"/>
</dbReference>
<dbReference type="GO" id="GO:0005694">
    <property type="term" value="C:chromosome"/>
    <property type="evidence" value="ECO:0000314"/>
    <property type="project" value="UniProtKB"/>
</dbReference>
<dbReference type="GO" id="GO:0005783">
    <property type="term" value="C:endoplasmic reticulum"/>
    <property type="evidence" value="ECO:0000314"/>
    <property type="project" value="UniProtKB"/>
</dbReference>
<dbReference type="GO" id="GO:0005730">
    <property type="term" value="C:nucleolus"/>
    <property type="evidence" value="ECO:0000314"/>
    <property type="project" value="UniProtKB"/>
</dbReference>
<dbReference type="GO" id="GO:0005654">
    <property type="term" value="C:nucleoplasm"/>
    <property type="evidence" value="ECO:0000314"/>
    <property type="project" value="UniProtKB"/>
</dbReference>
<dbReference type="GO" id="GO:0003677">
    <property type="term" value="F:DNA binding"/>
    <property type="evidence" value="ECO:0007669"/>
    <property type="project" value="UniProtKB-KW"/>
</dbReference>
<dbReference type="GO" id="GO:0003729">
    <property type="term" value="F:mRNA binding"/>
    <property type="evidence" value="ECO:0000318"/>
    <property type="project" value="GO_Central"/>
</dbReference>
<dbReference type="GO" id="GO:0003723">
    <property type="term" value="F:RNA binding"/>
    <property type="evidence" value="ECO:0007005"/>
    <property type="project" value="UniProtKB"/>
</dbReference>
<dbReference type="GO" id="GO:0010835">
    <property type="term" value="P:regulation of protein ADP-ribosylation"/>
    <property type="evidence" value="ECO:0000315"/>
    <property type="project" value="UniProtKB"/>
</dbReference>
<dbReference type="GO" id="GO:0006417">
    <property type="term" value="P:regulation of translation"/>
    <property type="evidence" value="ECO:0000318"/>
    <property type="project" value="GO_Central"/>
</dbReference>
<dbReference type="FunFam" id="1.25.10.10:FF:000207">
    <property type="entry name" value="Pumilio RNA-binding family member 3"/>
    <property type="match status" value="1"/>
</dbReference>
<dbReference type="FunFam" id="1.25.10.10:FF:001092">
    <property type="entry name" value="Pumilio RNA-binding family member 3"/>
    <property type="match status" value="1"/>
</dbReference>
<dbReference type="Gene3D" id="1.25.10.10">
    <property type="entry name" value="Leucine-rich Repeat Variant"/>
    <property type="match status" value="2"/>
</dbReference>
<dbReference type="InterPro" id="IPR011989">
    <property type="entry name" value="ARM-like"/>
</dbReference>
<dbReference type="InterPro" id="IPR016024">
    <property type="entry name" value="ARM-type_fold"/>
</dbReference>
<dbReference type="InterPro" id="IPR012959">
    <property type="entry name" value="CPL_dom"/>
</dbReference>
<dbReference type="InterPro" id="IPR033133">
    <property type="entry name" value="PUM-HD"/>
</dbReference>
<dbReference type="InterPro" id="IPR040059">
    <property type="entry name" value="PUM3"/>
</dbReference>
<dbReference type="InterPro" id="IPR001313">
    <property type="entry name" value="Pumilio_RNA-bd_rpt"/>
</dbReference>
<dbReference type="PANTHER" id="PTHR13389">
    <property type="entry name" value="PUMILIO HOMOLOG 3"/>
    <property type="match status" value="1"/>
</dbReference>
<dbReference type="PANTHER" id="PTHR13389:SF0">
    <property type="entry name" value="PUMILIO HOMOLOG 3"/>
    <property type="match status" value="1"/>
</dbReference>
<dbReference type="Pfam" id="PF08144">
    <property type="entry name" value="CPL"/>
    <property type="match status" value="1"/>
</dbReference>
<dbReference type="SMART" id="SM00025">
    <property type="entry name" value="Pumilio"/>
    <property type="match status" value="6"/>
</dbReference>
<dbReference type="SUPFAM" id="SSF48371">
    <property type="entry name" value="ARM repeat"/>
    <property type="match status" value="2"/>
</dbReference>
<dbReference type="PROSITE" id="PS50302">
    <property type="entry name" value="PUM"/>
    <property type="match status" value="5"/>
</dbReference>
<dbReference type="PROSITE" id="PS50303">
    <property type="entry name" value="PUM_HD"/>
    <property type="match status" value="1"/>
</dbReference>
<proteinExistence type="evidence at protein level"/>
<comment type="function">
    <text evidence="2 9 10">Inhibits the poly(ADP-ribosyl)ation activity of PARP1 and the degradation of PARP1 by CASP3 following genotoxic stress (PubMed:21266351). Binds to double-stranded RNA or DNA without sequence specificity (PubMed:25512524). Involved in development of the eye and of primordial germ cells (By similarity).</text>
</comment>
<comment type="subunit">
    <text evidence="9">Interacts with PARP1 (via catalytic domain).</text>
</comment>
<comment type="subcellular location">
    <subcellularLocation>
        <location evidence="6 9 12">Nucleus</location>
        <location evidence="6 9 12">Nucleolus</location>
    </subcellularLocation>
    <subcellularLocation>
        <location evidence="9">Nucleus</location>
        <location evidence="9">Nucleoplasm</location>
    </subcellularLocation>
    <subcellularLocation>
        <location evidence="8">Chromosome</location>
    </subcellularLocation>
    <text evidence="9">Localizes predominantly in the nucleolus with minor punctate signals in the nucleoplasm.</text>
</comment>
<comment type="tissue specificity">
    <text evidence="11">Widely expressed.</text>
</comment>
<comment type="domain">
    <text>The HA-8 region can be cleaved and exposed at the cell surface where it plays a role as a minor histocompatibility HLA-A*0201-restricted antigen.</text>
</comment>
<comment type="domain">
    <text evidence="10">A 90 degree bend between Pumilio repeats 3 and 4 gives rise to a L-shaped protein.</text>
</comment>
<comment type="polymorphism">
    <text evidence="5">The following alleles of HA-8 are known: HA-8R, HA-8P, HA-8PL, of which only HA-8R leads to specific cytotoxic T lymphocyte (CTL) recognition. The lack of CTL recognition of cells expressing HA-8P may be due to impaired transport associated with antigen processing. The sequence shown is that of HA-8R.</text>
</comment>
<comment type="sequence caution" evidence="15">
    <conflict type="erroneous initiation">
        <sequence resource="EMBL-CDS" id="BAA02808"/>
    </conflict>
    <text>Truncated N-terminus.</text>
</comment>
<reference key="1">
    <citation type="journal article" date="2004" name="Nat. Genet.">
        <title>Complete sequencing and characterization of 21,243 full-length human cDNAs.</title>
        <authorList>
            <person name="Ota T."/>
            <person name="Suzuki Y."/>
            <person name="Nishikawa T."/>
            <person name="Otsuki T."/>
            <person name="Sugiyama T."/>
            <person name="Irie R."/>
            <person name="Wakamatsu A."/>
            <person name="Hayashi K."/>
            <person name="Sato H."/>
            <person name="Nagai K."/>
            <person name="Kimura K."/>
            <person name="Makita H."/>
            <person name="Sekine M."/>
            <person name="Obayashi M."/>
            <person name="Nishi T."/>
            <person name="Shibahara T."/>
            <person name="Tanaka T."/>
            <person name="Ishii S."/>
            <person name="Yamamoto J."/>
            <person name="Saito K."/>
            <person name="Kawai Y."/>
            <person name="Isono Y."/>
            <person name="Nakamura Y."/>
            <person name="Nagahari K."/>
            <person name="Murakami K."/>
            <person name="Yasuda T."/>
            <person name="Iwayanagi T."/>
            <person name="Wagatsuma M."/>
            <person name="Shiratori A."/>
            <person name="Sudo H."/>
            <person name="Hosoiri T."/>
            <person name="Kaku Y."/>
            <person name="Kodaira H."/>
            <person name="Kondo H."/>
            <person name="Sugawara M."/>
            <person name="Takahashi M."/>
            <person name="Kanda K."/>
            <person name="Yokoi T."/>
            <person name="Furuya T."/>
            <person name="Kikkawa E."/>
            <person name="Omura Y."/>
            <person name="Abe K."/>
            <person name="Kamihara K."/>
            <person name="Katsuta N."/>
            <person name="Sato K."/>
            <person name="Tanikawa M."/>
            <person name="Yamazaki M."/>
            <person name="Ninomiya K."/>
            <person name="Ishibashi T."/>
            <person name="Yamashita H."/>
            <person name="Murakawa K."/>
            <person name="Fujimori K."/>
            <person name="Tanai H."/>
            <person name="Kimata M."/>
            <person name="Watanabe M."/>
            <person name="Hiraoka S."/>
            <person name="Chiba Y."/>
            <person name="Ishida S."/>
            <person name="Ono Y."/>
            <person name="Takiguchi S."/>
            <person name="Watanabe S."/>
            <person name="Yosida M."/>
            <person name="Hotuta T."/>
            <person name="Kusano J."/>
            <person name="Kanehori K."/>
            <person name="Takahashi-Fujii A."/>
            <person name="Hara H."/>
            <person name="Tanase T.-O."/>
            <person name="Nomura Y."/>
            <person name="Togiya S."/>
            <person name="Komai F."/>
            <person name="Hara R."/>
            <person name="Takeuchi K."/>
            <person name="Arita M."/>
            <person name="Imose N."/>
            <person name="Musashino K."/>
            <person name="Yuuki H."/>
            <person name="Oshima A."/>
            <person name="Sasaki N."/>
            <person name="Aotsuka S."/>
            <person name="Yoshikawa Y."/>
            <person name="Matsunawa H."/>
            <person name="Ichihara T."/>
            <person name="Shiohata N."/>
            <person name="Sano S."/>
            <person name="Moriya S."/>
            <person name="Momiyama H."/>
            <person name="Satoh N."/>
            <person name="Takami S."/>
            <person name="Terashima Y."/>
            <person name="Suzuki O."/>
            <person name="Nakagawa S."/>
            <person name="Senoh A."/>
            <person name="Mizoguchi H."/>
            <person name="Goto Y."/>
            <person name="Shimizu F."/>
            <person name="Wakebe H."/>
            <person name="Hishigaki H."/>
            <person name="Watanabe T."/>
            <person name="Sugiyama A."/>
            <person name="Takemoto M."/>
            <person name="Kawakami B."/>
            <person name="Yamazaki M."/>
            <person name="Watanabe K."/>
            <person name="Kumagai A."/>
            <person name="Itakura S."/>
            <person name="Fukuzumi Y."/>
            <person name="Fujimori Y."/>
            <person name="Komiyama M."/>
            <person name="Tashiro H."/>
            <person name="Tanigami A."/>
            <person name="Fujiwara T."/>
            <person name="Ono T."/>
            <person name="Yamada K."/>
            <person name="Fujii Y."/>
            <person name="Ozaki K."/>
            <person name="Hirao M."/>
            <person name="Ohmori Y."/>
            <person name="Kawabata A."/>
            <person name="Hikiji T."/>
            <person name="Kobatake N."/>
            <person name="Inagaki H."/>
            <person name="Ikema Y."/>
            <person name="Okamoto S."/>
            <person name="Okitani R."/>
            <person name="Kawakami T."/>
            <person name="Noguchi S."/>
            <person name="Itoh T."/>
            <person name="Shigeta K."/>
            <person name="Senba T."/>
            <person name="Matsumura K."/>
            <person name="Nakajima Y."/>
            <person name="Mizuno T."/>
            <person name="Morinaga M."/>
            <person name="Sasaki M."/>
            <person name="Togashi T."/>
            <person name="Oyama M."/>
            <person name="Hata H."/>
            <person name="Watanabe M."/>
            <person name="Komatsu T."/>
            <person name="Mizushima-Sugano J."/>
            <person name="Satoh T."/>
            <person name="Shirai Y."/>
            <person name="Takahashi Y."/>
            <person name="Nakagawa K."/>
            <person name="Okumura K."/>
            <person name="Nagase T."/>
            <person name="Nomura N."/>
            <person name="Kikuchi H."/>
            <person name="Masuho Y."/>
            <person name="Yamashita R."/>
            <person name="Nakai K."/>
            <person name="Yada T."/>
            <person name="Nakamura Y."/>
            <person name="Ohara O."/>
            <person name="Isogai T."/>
            <person name="Sugano S."/>
        </authorList>
    </citation>
    <scope>NUCLEOTIDE SEQUENCE [LARGE SCALE MRNA]</scope>
    <source>
        <tissue>Synovium</tissue>
    </source>
</reference>
<reference key="2">
    <citation type="journal article" date="2004" name="Nature">
        <title>DNA sequence and analysis of human chromosome 9.</title>
        <authorList>
            <person name="Humphray S.J."/>
            <person name="Oliver K."/>
            <person name="Hunt A.R."/>
            <person name="Plumb R.W."/>
            <person name="Loveland J.E."/>
            <person name="Howe K.L."/>
            <person name="Andrews T.D."/>
            <person name="Searle S."/>
            <person name="Hunt S.E."/>
            <person name="Scott C.E."/>
            <person name="Jones M.C."/>
            <person name="Ainscough R."/>
            <person name="Almeida J.P."/>
            <person name="Ambrose K.D."/>
            <person name="Ashwell R.I.S."/>
            <person name="Babbage A.K."/>
            <person name="Babbage S."/>
            <person name="Bagguley C.L."/>
            <person name="Bailey J."/>
            <person name="Banerjee R."/>
            <person name="Barker D.J."/>
            <person name="Barlow K.F."/>
            <person name="Bates K."/>
            <person name="Beasley H."/>
            <person name="Beasley O."/>
            <person name="Bird C.P."/>
            <person name="Bray-Allen S."/>
            <person name="Brown A.J."/>
            <person name="Brown J.Y."/>
            <person name="Burford D."/>
            <person name="Burrill W."/>
            <person name="Burton J."/>
            <person name="Carder C."/>
            <person name="Carter N.P."/>
            <person name="Chapman J.C."/>
            <person name="Chen Y."/>
            <person name="Clarke G."/>
            <person name="Clark S.Y."/>
            <person name="Clee C.M."/>
            <person name="Clegg S."/>
            <person name="Collier R.E."/>
            <person name="Corby N."/>
            <person name="Crosier M."/>
            <person name="Cummings A.T."/>
            <person name="Davies J."/>
            <person name="Dhami P."/>
            <person name="Dunn M."/>
            <person name="Dutta I."/>
            <person name="Dyer L.W."/>
            <person name="Earthrowl M.E."/>
            <person name="Faulkner L."/>
            <person name="Fleming C.J."/>
            <person name="Frankish A."/>
            <person name="Frankland J.A."/>
            <person name="French L."/>
            <person name="Fricker D.G."/>
            <person name="Garner P."/>
            <person name="Garnett J."/>
            <person name="Ghori J."/>
            <person name="Gilbert J.G.R."/>
            <person name="Glison C."/>
            <person name="Grafham D.V."/>
            <person name="Gribble S."/>
            <person name="Griffiths C."/>
            <person name="Griffiths-Jones S."/>
            <person name="Grocock R."/>
            <person name="Guy J."/>
            <person name="Hall R.E."/>
            <person name="Hammond S."/>
            <person name="Harley J.L."/>
            <person name="Harrison E.S.I."/>
            <person name="Hart E.A."/>
            <person name="Heath P.D."/>
            <person name="Henderson C.D."/>
            <person name="Hopkins B.L."/>
            <person name="Howard P.J."/>
            <person name="Howden P.J."/>
            <person name="Huckle E."/>
            <person name="Johnson C."/>
            <person name="Johnson D."/>
            <person name="Joy A.A."/>
            <person name="Kay M."/>
            <person name="Keenan S."/>
            <person name="Kershaw J.K."/>
            <person name="Kimberley A.M."/>
            <person name="King A."/>
            <person name="Knights A."/>
            <person name="Laird G.K."/>
            <person name="Langford C."/>
            <person name="Lawlor S."/>
            <person name="Leongamornlert D.A."/>
            <person name="Leversha M."/>
            <person name="Lloyd C."/>
            <person name="Lloyd D.M."/>
            <person name="Lovell J."/>
            <person name="Martin S."/>
            <person name="Mashreghi-Mohammadi M."/>
            <person name="Matthews L."/>
            <person name="McLaren S."/>
            <person name="McLay K.E."/>
            <person name="McMurray A."/>
            <person name="Milne S."/>
            <person name="Nickerson T."/>
            <person name="Nisbett J."/>
            <person name="Nordsiek G."/>
            <person name="Pearce A.V."/>
            <person name="Peck A.I."/>
            <person name="Porter K.M."/>
            <person name="Pandian R."/>
            <person name="Pelan S."/>
            <person name="Phillimore B."/>
            <person name="Povey S."/>
            <person name="Ramsey Y."/>
            <person name="Rand V."/>
            <person name="Scharfe M."/>
            <person name="Sehra H.K."/>
            <person name="Shownkeen R."/>
            <person name="Sims S.K."/>
            <person name="Skuce C.D."/>
            <person name="Smith M."/>
            <person name="Steward C.A."/>
            <person name="Swarbreck D."/>
            <person name="Sycamore N."/>
            <person name="Tester J."/>
            <person name="Thorpe A."/>
            <person name="Tracey A."/>
            <person name="Tromans A."/>
            <person name="Thomas D.W."/>
            <person name="Wall M."/>
            <person name="Wallis J.M."/>
            <person name="West A.P."/>
            <person name="Whitehead S.L."/>
            <person name="Willey D.L."/>
            <person name="Williams S.A."/>
            <person name="Wilming L."/>
            <person name="Wray P.W."/>
            <person name="Young L."/>
            <person name="Ashurst J.L."/>
            <person name="Coulson A."/>
            <person name="Blocker H."/>
            <person name="Durbin R.M."/>
            <person name="Sulston J.E."/>
            <person name="Hubbard T."/>
            <person name="Jackson M.J."/>
            <person name="Bentley D.R."/>
            <person name="Beck S."/>
            <person name="Rogers J."/>
            <person name="Dunham I."/>
        </authorList>
    </citation>
    <scope>NUCLEOTIDE SEQUENCE [LARGE SCALE GENOMIC DNA] (ALLELE HA-8R)</scope>
</reference>
<reference key="3">
    <citation type="submission" date="2005-09" db="EMBL/GenBank/DDBJ databases">
        <authorList>
            <person name="Mural R.J."/>
            <person name="Istrail S."/>
            <person name="Sutton G.G."/>
            <person name="Florea L."/>
            <person name="Halpern A.L."/>
            <person name="Mobarry C.M."/>
            <person name="Lippert R."/>
            <person name="Walenz B."/>
            <person name="Shatkay H."/>
            <person name="Dew I."/>
            <person name="Miller J.R."/>
            <person name="Flanigan M.J."/>
            <person name="Edwards N.J."/>
            <person name="Bolanos R."/>
            <person name="Fasulo D."/>
            <person name="Halldorsson B.V."/>
            <person name="Hannenhalli S."/>
            <person name="Turner R."/>
            <person name="Yooseph S."/>
            <person name="Lu F."/>
            <person name="Nusskern D.R."/>
            <person name="Shue B.C."/>
            <person name="Zheng X.H."/>
            <person name="Zhong F."/>
            <person name="Delcher A.L."/>
            <person name="Huson D.H."/>
            <person name="Kravitz S.A."/>
            <person name="Mouchard L."/>
            <person name="Reinert K."/>
            <person name="Remington K.A."/>
            <person name="Clark A.G."/>
            <person name="Waterman M.S."/>
            <person name="Eichler E.E."/>
            <person name="Adams M.D."/>
            <person name="Hunkapiller M.W."/>
            <person name="Myers E.W."/>
            <person name="Venter J.C."/>
        </authorList>
    </citation>
    <scope>NUCLEOTIDE SEQUENCE [LARGE SCALE GENOMIC DNA]</scope>
</reference>
<reference key="4">
    <citation type="journal article" date="2004" name="Genome Res.">
        <title>The status, quality, and expansion of the NIH full-length cDNA project: the Mammalian Gene Collection (MGC).</title>
        <authorList>
            <consortium name="The MGC Project Team"/>
        </authorList>
    </citation>
    <scope>NUCLEOTIDE SEQUENCE [LARGE SCALE MRNA] (ALLELE HA-8PL)</scope>
    <scope>VARIANT ASN-13</scope>
    <source>
        <tissue>Uterus</tissue>
    </source>
</reference>
<reference key="5">
    <citation type="journal article" date="1994" name="DNA Res.">
        <title>Prediction of the coding sequences of unidentified human genes. I. The coding sequences of 40 new genes (KIAA0001-KIAA0040) deduced by analysis of randomly sampled cDNA clones from human immature myeloid cell line KG-1.</title>
        <authorList>
            <person name="Nomura N."/>
            <person name="Miyajima N."/>
            <person name="Sazuka T."/>
            <person name="Tanaka A."/>
            <person name="Kawarabayasi Y."/>
            <person name="Sato S."/>
            <person name="Nagase T."/>
            <person name="Seki N."/>
            <person name="Ishikawa K."/>
            <person name="Tabata S."/>
        </authorList>
    </citation>
    <scope>NUCLEOTIDE SEQUENCE [LARGE SCALE MRNA] OF 2-648 (ALLELE HA-8R)</scope>
    <scope>TISSUE SPECIFICITY</scope>
    <source>
        <tissue>Bone marrow</tissue>
    </source>
</reference>
<reference key="6">
    <citation type="submission" date="2005-08" db="UniProtKB">
        <authorList>
            <person name="Bienvenut W.V."/>
        </authorList>
    </citation>
    <scope>PROTEIN SEQUENCE OF 130-137; 294-301; 331-342; 345-352 AND 441-464</scope>
    <scope>SUBCELLULAR LOCATION</scope>
    <scope>IDENTIFICATION BY MASS SPECTROMETRY</scope>
    <source>
        <tissue>Cervix carcinoma</tissue>
    </source>
</reference>
<reference key="7">
    <citation type="submission" date="2002-03" db="EMBL/GenBank/DDBJ databases">
        <title>Cloning and identification of human gene 5 transactivated by hepatitis B virus X antigen.</title>
        <authorList>
            <person name="Liu Y."/>
            <person name="Cheng J."/>
            <person name="Lu Y."/>
            <person name="Wang G."/>
            <person name="Li K."/>
            <person name="Chen J."/>
            <person name="Li L."/>
        </authorList>
    </citation>
    <scope>NUCLEOTIDE SEQUENCE [MRNA] OF 141-648 (ALLELE HA-8R)</scope>
</reference>
<reference key="8">
    <citation type="submission" date="2004-06" db="EMBL/GenBank/DDBJ databases">
        <title>Cloning of human full open reading frames in Gateway(TM) system entry vector (pDONR201).</title>
        <authorList>
            <person name="Ebert L."/>
            <person name="Schick M."/>
            <person name="Neubert P."/>
            <person name="Schatten R."/>
            <person name="Henze S."/>
            <person name="Korn B."/>
        </authorList>
    </citation>
    <scope>NUCLEOTIDE SEQUENCE [LARGE SCALE MRNA] OF 141-648 (ALLELE HA-8R)</scope>
</reference>
<reference key="9">
    <citation type="journal article" date="2001" name="J. Exp. Med.">
        <title>The immunogenicity of a new human minor histocompatibility antigen results from differential antigen processing.</title>
        <authorList>
            <person name="Brickner A.G."/>
            <person name="Warren E.H."/>
            <person name="Caldwell J.A."/>
            <person name="Akatsuka Y."/>
            <person name="Golovina T.N."/>
            <person name="Zarling A.L."/>
            <person name="Shabanowitz J."/>
            <person name="Eisenlohr L.C."/>
            <person name="Hunt D.F."/>
            <person name="Engelhard V.H."/>
            <person name="Riddell S.R."/>
        </authorList>
    </citation>
    <scope>NUCLEOTIDE SEQUENCE [MRNA] OF 235-350 (ALLELES HA-8R; HA-8P AND HA-8PL)</scope>
    <scope>IDENTIFICATION BY MASS SPECTROMETRY OF HA-8</scope>
    <scope>POLYMORPHISM</scope>
    <source>
        <tissue>B-cell</tissue>
    </source>
</reference>
<reference key="10">
    <citation type="journal article" date="2002" name="Mol. Biol. Cell">
        <title>Functional proteomic analysis of human nucleolus.</title>
        <authorList>
            <person name="Scherl A."/>
            <person name="Coute Y."/>
            <person name="Deon C."/>
            <person name="Calle A."/>
            <person name="Kindbeiter K."/>
            <person name="Sanchez J.-C."/>
            <person name="Greco A."/>
            <person name="Hochstrasser D.F."/>
            <person name="Diaz J.-J."/>
        </authorList>
    </citation>
    <scope>SUBCELLULAR LOCATION [LARGE SCALE ANALYSIS]</scope>
    <source>
        <tissue>Cervix carcinoma</tissue>
    </source>
</reference>
<reference key="11">
    <citation type="journal article" date="2010" name="Cell">
        <title>The protein composition of mitotic chromosomes determined using multiclassifier combinatorial proteomics.</title>
        <authorList>
            <person name="Ohta S."/>
            <person name="Bukowski-Wills J.C."/>
            <person name="Sanchez-Pulido L."/>
            <person name="Alves Fde L."/>
            <person name="Wood L."/>
            <person name="Chen Z.A."/>
            <person name="Platani M."/>
            <person name="Fischer L."/>
            <person name="Hudson D.F."/>
            <person name="Ponting C.P."/>
            <person name="Fukagawa T."/>
            <person name="Earnshaw W.C."/>
            <person name="Rappsilber J."/>
        </authorList>
    </citation>
    <scope>SUBCELLULAR LOCATION</scope>
</reference>
<reference key="12">
    <citation type="journal article" date="2011" name="Cancer Res.">
        <title>hPuf-A/KIAA0020 modulates PARP-1 cleavage upon genotoxic stress.</title>
        <authorList>
            <person name="Chang H.Y."/>
            <person name="Fan C.C."/>
            <person name="Chu P.C."/>
            <person name="Hong B.E."/>
            <person name="Lee H.J."/>
            <person name="Chang M.S."/>
        </authorList>
    </citation>
    <scope>FUNCTION</scope>
    <scope>INTERACTION WITH PARP1</scope>
    <scope>SUBCELLULAR LOCATION</scope>
    <scope>NUCLEAR LOCALIZATION SIGNAL</scope>
</reference>
<reference key="13">
    <citation type="journal article" date="2014" name="Proc. Natl. Acad. Sci. U.S.A.">
        <title>A divergent Pumilio repeat protein family for pre-rRNA processing and mRNA localization.</title>
        <authorList>
            <person name="Qiu C."/>
            <person name="McCann K.L."/>
            <person name="Wine R.N."/>
            <person name="Baserga S.J."/>
            <person name="Hall T.M."/>
        </authorList>
    </citation>
    <scope>X-RAY CRYSTALLOGRAPHY (2.15 ANGSTROMS) OF 123-648 ALONE AND IN COMPLEX WITH DOUBLE-STRANDED DNA</scope>
    <scope>PUMILIO REPEATS</scope>
    <scope>RNA-BINDING</scope>
    <scope>DNA-BINDING</scope>
</reference>
<keyword id="KW-0002">3D-structure</keyword>
<keyword id="KW-0007">Acetylation</keyword>
<keyword id="KW-0158">Chromosome</keyword>
<keyword id="KW-0903">Direct protein sequencing</keyword>
<keyword id="KW-0238">DNA-binding</keyword>
<keyword id="KW-0539">Nucleus</keyword>
<keyword id="KW-1267">Proteomics identification</keyword>
<keyword id="KW-1185">Reference proteome</keyword>
<keyword id="KW-0677">Repeat</keyword>
<keyword id="KW-0694">RNA-binding</keyword>
<sequence>MEVKGKKQFTGKSTKTAQEKNRFHKNSDSGSSKTFPTRKVAKEGGPKVTSRNFEKSITKLGKKGVKQFKNKQQGDKSPKNKFQPANKFNKKRKFQPDGRSDESAAKKPKWDDFKKKKKELKQSRQLSDKTNYDIVVRAKQMWEILRRKDCDKEKRVKLMSDLQKLIQGKIKTIAFAHDSTRVIQCYIQYGNEEQRKQAFEELRDDLVELSKAKYSRNIVKKFLMYGSKPQIAEIIRSFKGHVRKMLRHAEASAIVEYAYNDKAILEQRNMLTEELYGNTFQLYKSADHRTLDKVLEVQPEKLELIMDEMKQILTPMAQKEAVIKHSLVHKVFLDFFTYAPPKLRSEMIEAIREAVVYLAHTHDGARVAMHCLWHGTPKDRKVIVKTMKTYVEKVANGQYSHLVLLAAFDCIDDTKLVKQIIISEIISSLPSIVNDKYGRKVLLYLLSPRDPAHTVREIIEVLQKGDGNAHSKKDTEVRRRELLESISPALLSYLQEHAQEVVLDKSACVLVSDILGSATGDVQPTMNAIASLAATGLHPGGKDGELHIAEHPAGHLVLKWLIEQDKKMKENGREGCFAKTLVEHVGMKNLKSWASVNRGAIILSSLLQSCDLEVANKVKAALKSLIPTLEKTKSTSKGIEILLEKLST</sequence>
<gene>
    <name evidence="16" type="primary">PUM3</name>
    <name evidence="13" type="synonym">cPERP-C</name>
    <name evidence="16" type="synonym">KIAA0020</name>
    <name evidence="14" type="synonym">PUF-A</name>
    <name type="synonym">XTP5</name>
</gene>
<accession>Q15397</accession>
<accession>A8K804</accession>
<accession>Q547G7</accession>
<accession>Q5SZY9</accession>
<accession>Q6IB47</accession>
<accession>Q96B27</accession>
<accession>Q96L78</accession>
<accession>Q96L79</accession>
<accession>Q96L80</accession>
<organism>
    <name type="scientific">Homo sapiens</name>
    <name type="common">Human</name>
    <dbReference type="NCBI Taxonomy" id="9606"/>
    <lineage>
        <taxon>Eukaryota</taxon>
        <taxon>Metazoa</taxon>
        <taxon>Chordata</taxon>
        <taxon>Craniata</taxon>
        <taxon>Vertebrata</taxon>
        <taxon>Euteleostomi</taxon>
        <taxon>Mammalia</taxon>
        <taxon>Eutheria</taxon>
        <taxon>Euarchontoglires</taxon>
        <taxon>Primates</taxon>
        <taxon>Haplorrhini</taxon>
        <taxon>Catarrhini</taxon>
        <taxon>Hominidae</taxon>
        <taxon>Homo</taxon>
    </lineage>
</organism>
<protein>
    <recommendedName>
        <fullName evidence="15">Pumilio homolog 3</fullName>
    </recommendedName>
    <alternativeName>
        <fullName>HBV X-transactivated gene 5 protein</fullName>
    </alternativeName>
    <alternativeName>
        <fullName>HBV XAg-transactivated protein 5</fullName>
    </alternativeName>
    <alternativeName>
        <fullName>Minor histocompatibility antigen HA-8</fullName>
        <shortName>HLA-HA8</shortName>
    </alternativeName>
</protein>
<name>PUM3_HUMAN</name>
<feature type="chain" id="PRO_0000075929" description="Pumilio homolog 3">
    <location>
        <begin position="1"/>
        <end position="648"/>
    </location>
</feature>
<feature type="domain" description="PUM-HD" evidence="3">
    <location>
        <begin position="143"/>
        <end position="510"/>
    </location>
</feature>
<feature type="repeat" description="Pumilio 1" evidence="10">
    <location>
        <begin position="177"/>
        <end position="212"/>
    </location>
</feature>
<feature type="repeat" description="Pumilio 2" evidence="10">
    <location>
        <begin position="213"/>
        <end position="248"/>
    </location>
</feature>
<feature type="repeat" description="Pumilio 3" evidence="10">
    <location>
        <begin position="249"/>
        <end position="277"/>
    </location>
</feature>
<feature type="repeat" description="Pumilio 4" evidence="10">
    <location>
        <begin position="289"/>
        <end position="325"/>
    </location>
</feature>
<feature type="repeat" description="Pumilio 5" evidence="10">
    <location>
        <begin position="326"/>
        <end position="361"/>
    </location>
</feature>
<feature type="repeat" description="Pumilio 6" evidence="10">
    <location>
        <begin position="362"/>
        <end position="397"/>
    </location>
</feature>
<feature type="repeat" description="Pumilio 7" evidence="10">
    <location>
        <begin position="398"/>
        <end position="435"/>
    </location>
</feature>
<feature type="repeat" description="Pumilio 8" evidence="10">
    <location>
        <begin position="436"/>
        <end position="504"/>
    </location>
</feature>
<feature type="repeat" description="Pumilio 9" evidence="10">
    <location>
        <begin position="505"/>
        <end position="551"/>
    </location>
</feature>
<feature type="repeat" description="Pumilio 10" evidence="10">
    <location>
        <begin position="552"/>
        <end position="596"/>
    </location>
</feature>
<feature type="repeat" description="Pumilio 11" evidence="10">
    <location>
        <begin position="597"/>
        <end position="636"/>
    </location>
</feature>
<feature type="region of interest" description="Disordered" evidence="4">
    <location>
        <begin position="1"/>
        <end position="124"/>
    </location>
</feature>
<feature type="region of interest" description="HA-8">
    <location>
        <begin position="289"/>
        <end position="297"/>
    </location>
</feature>
<feature type="short sequence motif" description="Nuclear localization signal" evidence="9">
    <location>
        <begin position="106"/>
        <end position="118"/>
    </location>
</feature>
<feature type="compositionally biased region" description="Basic and acidic residues" evidence="4">
    <location>
        <begin position="17"/>
        <end position="27"/>
    </location>
</feature>
<feature type="compositionally biased region" description="Basic residues" evidence="4">
    <location>
        <begin position="60"/>
        <end position="69"/>
    </location>
</feature>
<feature type="compositionally biased region" description="Basic and acidic residues" evidence="4">
    <location>
        <begin position="94"/>
        <end position="124"/>
    </location>
</feature>
<feature type="modified residue" description="N6-acetyllysine" evidence="1">
    <location>
        <position position="33"/>
    </location>
</feature>
<feature type="sequence variant" id="VAR_051613" description="In dbSNP:rs10968457." evidence="7">
    <original>S</original>
    <variation>N</variation>
    <location>
        <position position="13"/>
    </location>
</feature>
<feature type="sequence variant" id="VAR_051614" description="In dbSNP:rs35869387.">
    <original>I</original>
    <variation>V</variation>
    <location>
        <position position="264"/>
    </location>
</feature>
<feature type="sequence variant" id="VAR_023772" description="In allele HA-8P and allele HA-8PL; dbSNP:rs2173904." evidence="5 7">
    <original>R</original>
    <variation>P</variation>
    <location>
        <position position="289"/>
    </location>
</feature>
<feature type="sequence variant" id="VAR_023773" description="In allele HA-8PL; dbSNP:rs2270891." evidence="5 7">
    <original>V</original>
    <variation>L</variation>
    <location>
        <position position="297"/>
    </location>
</feature>
<feature type="sequence variant" id="VAR_051615" description="In dbSNP:rs3736390.">
    <original>T</original>
    <variation>S</variation>
    <location>
        <position position="414"/>
    </location>
</feature>
<feature type="sequence variant" id="VAR_051616" description="In dbSNP:rs2270889.">
    <original>R</original>
    <variation>Q</variation>
    <location>
        <position position="480"/>
    </location>
</feature>
<feature type="sequence conflict" description="In Ref. 8; CAG33238." evidence="15" ref="8">
    <original>L</original>
    <variation>S</variation>
    <location>
        <position position="625"/>
    </location>
</feature>
<feature type="helix" evidence="17">
    <location>
        <begin position="132"/>
        <end position="145"/>
    </location>
</feature>
<feature type="strand" evidence="17">
    <location>
        <begin position="147"/>
        <end position="149"/>
    </location>
</feature>
<feature type="helix" evidence="17">
    <location>
        <begin position="152"/>
        <end position="166"/>
    </location>
</feature>
<feature type="turn" evidence="17">
    <location>
        <begin position="167"/>
        <end position="169"/>
    </location>
</feature>
<feature type="helix" evidence="17">
    <location>
        <begin position="170"/>
        <end position="175"/>
    </location>
</feature>
<feature type="turn" evidence="17">
    <location>
        <begin position="177"/>
        <end position="179"/>
    </location>
</feature>
<feature type="helix" evidence="17">
    <location>
        <begin position="180"/>
        <end position="189"/>
    </location>
</feature>
<feature type="helix" evidence="17">
    <location>
        <begin position="192"/>
        <end position="202"/>
    </location>
</feature>
<feature type="helix" evidence="17">
    <location>
        <begin position="203"/>
        <end position="205"/>
    </location>
</feature>
<feature type="helix" evidence="17">
    <location>
        <begin position="206"/>
        <end position="210"/>
    </location>
</feature>
<feature type="helix" evidence="17">
    <location>
        <begin position="213"/>
        <end position="225"/>
    </location>
</feature>
<feature type="helix" evidence="17">
    <location>
        <begin position="228"/>
        <end position="238"/>
    </location>
</feature>
<feature type="turn" evidence="17">
    <location>
        <begin position="239"/>
        <end position="241"/>
    </location>
</feature>
<feature type="helix" evidence="17">
    <location>
        <begin position="242"/>
        <end position="245"/>
    </location>
</feature>
<feature type="helix" evidence="17">
    <location>
        <begin position="249"/>
        <end position="261"/>
    </location>
</feature>
<feature type="helix" evidence="17">
    <location>
        <begin position="265"/>
        <end position="272"/>
    </location>
</feature>
<feature type="helix" evidence="17">
    <location>
        <begin position="273"/>
        <end position="276"/>
    </location>
</feature>
<feature type="helix" evidence="17">
    <location>
        <begin position="278"/>
        <end position="283"/>
    </location>
</feature>
<feature type="strand" evidence="17">
    <location>
        <begin position="286"/>
        <end position="288"/>
    </location>
</feature>
<feature type="helix" evidence="17">
    <location>
        <begin position="291"/>
        <end position="297"/>
    </location>
</feature>
<feature type="helix" evidence="17">
    <location>
        <begin position="299"/>
        <end position="301"/>
    </location>
</feature>
<feature type="helix" evidence="17">
    <location>
        <begin position="302"/>
        <end position="313"/>
    </location>
</feature>
<feature type="helix" evidence="17">
    <location>
        <begin position="314"/>
        <end position="318"/>
    </location>
</feature>
<feature type="helix" evidence="17">
    <location>
        <begin position="320"/>
        <end position="323"/>
    </location>
</feature>
<feature type="helix" evidence="17">
    <location>
        <begin position="326"/>
        <end position="338"/>
    </location>
</feature>
<feature type="helix" evidence="17">
    <location>
        <begin position="341"/>
        <end position="351"/>
    </location>
</feature>
<feature type="turn" evidence="17">
    <location>
        <begin position="352"/>
        <end position="354"/>
    </location>
</feature>
<feature type="helix" evidence="17">
    <location>
        <begin position="355"/>
        <end position="358"/>
    </location>
</feature>
<feature type="helix" evidence="17">
    <location>
        <begin position="362"/>
        <end position="374"/>
    </location>
</feature>
<feature type="helix" evidence="17">
    <location>
        <begin position="377"/>
        <end position="386"/>
    </location>
</feature>
<feature type="turn" evidence="17">
    <location>
        <begin position="387"/>
        <end position="390"/>
    </location>
</feature>
<feature type="helix" evidence="17">
    <location>
        <begin position="391"/>
        <end position="395"/>
    </location>
</feature>
<feature type="turn" evidence="17">
    <location>
        <begin position="398"/>
        <end position="400"/>
    </location>
</feature>
<feature type="helix" evidence="17">
    <location>
        <begin position="401"/>
        <end position="410"/>
    </location>
</feature>
<feature type="helix" evidence="17">
    <location>
        <begin position="414"/>
        <end position="427"/>
    </location>
</feature>
<feature type="helix" evidence="17">
    <location>
        <begin position="429"/>
        <end position="433"/>
    </location>
</feature>
<feature type="helix" evidence="17">
    <location>
        <begin position="436"/>
        <end position="446"/>
    </location>
</feature>
<feature type="turn" evidence="17">
    <location>
        <begin position="451"/>
        <end position="453"/>
    </location>
</feature>
<feature type="helix" evidence="17">
    <location>
        <begin position="456"/>
        <end position="463"/>
    </location>
</feature>
<feature type="turn" evidence="17">
    <location>
        <begin position="464"/>
        <end position="467"/>
    </location>
</feature>
<feature type="helix" evidence="17">
    <location>
        <begin position="475"/>
        <end position="496"/>
    </location>
</feature>
<feature type="helix" evidence="17">
    <location>
        <begin position="498"/>
        <end position="502"/>
    </location>
</feature>
<feature type="helix" evidence="17">
    <location>
        <begin position="507"/>
        <end position="509"/>
    </location>
</feature>
<feature type="helix" evidence="17">
    <location>
        <begin position="510"/>
        <end position="517"/>
    </location>
</feature>
<feature type="helix" evidence="17">
    <location>
        <begin position="523"/>
        <end position="531"/>
    </location>
</feature>
<feature type="helix" evidence="17">
    <location>
        <begin position="548"/>
        <end position="550"/>
    </location>
</feature>
<feature type="helix" evidence="17">
    <location>
        <begin position="554"/>
        <end position="570"/>
    </location>
</feature>
<feature type="helix" evidence="17">
    <location>
        <begin position="577"/>
        <end position="585"/>
    </location>
</feature>
<feature type="helix" evidence="17">
    <location>
        <begin position="587"/>
        <end position="592"/>
    </location>
</feature>
<feature type="helix" evidence="17">
    <location>
        <begin position="593"/>
        <end position="595"/>
    </location>
</feature>
<feature type="helix" evidence="17">
    <location>
        <begin position="597"/>
        <end position="607"/>
    </location>
</feature>
<feature type="helix" evidence="17">
    <location>
        <begin position="612"/>
        <end position="622"/>
    </location>
</feature>
<feature type="helix" evidence="17">
    <location>
        <begin position="623"/>
        <end position="625"/>
    </location>
</feature>
<feature type="helix" evidence="17">
    <location>
        <begin position="626"/>
        <end position="629"/>
    </location>
</feature>
<feature type="helix" evidence="17">
    <location>
        <begin position="637"/>
        <end position="645"/>
    </location>
</feature>
<evidence type="ECO:0000250" key="1">
    <source>
        <dbReference type="UniProtKB" id="Q8BKS9"/>
    </source>
</evidence>
<evidence type="ECO:0000250" key="2">
    <source>
        <dbReference type="UniProtKB" id="X1WGX5"/>
    </source>
</evidence>
<evidence type="ECO:0000255" key="3">
    <source>
        <dbReference type="PROSITE-ProRule" id="PRU00318"/>
    </source>
</evidence>
<evidence type="ECO:0000256" key="4">
    <source>
        <dbReference type="SAM" id="MobiDB-lite"/>
    </source>
</evidence>
<evidence type="ECO:0000269" key="5">
    <source>
    </source>
</evidence>
<evidence type="ECO:0000269" key="6">
    <source>
    </source>
</evidence>
<evidence type="ECO:0000269" key="7">
    <source>
    </source>
</evidence>
<evidence type="ECO:0000269" key="8">
    <source>
    </source>
</evidence>
<evidence type="ECO:0000269" key="9">
    <source>
    </source>
</evidence>
<evidence type="ECO:0000269" key="10">
    <source>
    </source>
</evidence>
<evidence type="ECO:0000269" key="11">
    <source>
    </source>
</evidence>
<evidence type="ECO:0000269" key="12">
    <source ref="6"/>
</evidence>
<evidence type="ECO:0000303" key="13">
    <source>
    </source>
</evidence>
<evidence type="ECO:0000303" key="14">
    <source>
    </source>
</evidence>
<evidence type="ECO:0000305" key="15"/>
<evidence type="ECO:0000312" key="16">
    <source>
        <dbReference type="HGNC" id="HGNC:29676"/>
    </source>
</evidence>
<evidence type="ECO:0007829" key="17">
    <source>
        <dbReference type="PDB" id="4WZR"/>
    </source>
</evidence>